<evidence type="ECO:0000255" key="1">
    <source>
        <dbReference type="HAMAP-Rule" id="MF_00096"/>
    </source>
</evidence>
<protein>
    <recommendedName>
        <fullName evidence="1">DNA mismatch repair protein MutS</fullName>
    </recommendedName>
</protein>
<sequence>MTEYTPMIKQYLEIKDKYQDAFLFFRLGDFYEMFFEDALNASQILEITLTGREGGTKEKIPMCGVPYHSASGYIDTLIEKGYKVAICEQVEDPKTTKGMVKREVVQLISPGTVMDERGLKAKENNYIASLYCYEGKEYGFAYSDLSTGELKSTVIEASEDRLINELTTLSTRELIVSSSEKEVLSDVMKEQLGLTFSVHEEDTIPVENEKLVTRHMSLSEKRAIGKLLHYLKETQKRDLGHLQQAVHYETSNYMKMDYYSKRNLELAESIRGKGRQGTLLWLLDNTQTAMGGRMLKQWIDRPLIDRKKIIDRQNDVSELMAHFFERLELVENLKNVYDLERLAGRVAYGNVNARDLIQLRNSLYQIPRIRATLLSMSSESLTELANQLDPCEELTEKLEEAIMDSAPISIREGGIIKDGYNSQLDTYRDASRNGKTWIAELERKERELTGIKTMKVGFNRVFGYYIEVTRANTHLLPEGRYERKQTLTNAERYITPELKEKEKLILDAEEKSMELEYQLFSEVREMVKDYIERLQKLAKSVSEIDCLQSFADISEKNHFIRPTLSEDGSLHVKQGRHPVVEKVMGAQSYVANDCVLDENREILLITGPNMSGKSTYMRQVALTAICAQVGCFVPAEEAILPIFDQIFTRIGAADDLIAGQSTFMVEMLEARNAIVHATKDSLILFDEIGRGTATYDGMALAQAIIEYIHENVHAKTLFSTHYHELTDLEKELSGLQNIHVSAVEENGKVVFLHKIKEGPADKSYGIHVAELAELPKSLIERASRILEQLENDDKKIIIASVKQPEEVHEEVQLSMFPVEPEKKASSKETKLLKEIASMNIMQMTPMDAMNKLYELQSKIH</sequence>
<name>MUTS_LISMC</name>
<reference key="1">
    <citation type="journal article" date="2012" name="BMC Genomics">
        <title>Comparative genomics and transcriptomics of lineages I, II, and III strains of Listeria monocytogenes.</title>
        <authorList>
            <person name="Hain T."/>
            <person name="Ghai R."/>
            <person name="Billion A."/>
            <person name="Kuenne C.T."/>
            <person name="Steinweg C."/>
            <person name="Izar B."/>
            <person name="Mohamed W."/>
            <person name="Mraheil M."/>
            <person name="Domann E."/>
            <person name="Schaffrath S."/>
            <person name="Karst U."/>
            <person name="Goesmann A."/>
            <person name="Oehm S."/>
            <person name="Puhler A."/>
            <person name="Merkl R."/>
            <person name="Vorwerk S."/>
            <person name="Glaser P."/>
            <person name="Garrido P."/>
            <person name="Rusniok C."/>
            <person name="Buchrieser C."/>
            <person name="Goebel W."/>
            <person name="Chakraborty T."/>
        </authorList>
    </citation>
    <scope>NUCLEOTIDE SEQUENCE [LARGE SCALE GENOMIC DNA]</scope>
    <source>
        <strain>CLIP80459</strain>
    </source>
</reference>
<gene>
    <name evidence="1" type="primary">mutS</name>
    <name type="ordered locus">Lm4b_01412</name>
</gene>
<comment type="function">
    <text evidence="1">This protein is involved in the repair of mismatches in DNA. It is possible that it carries out the mismatch recognition step. This protein has a weak ATPase activity.</text>
</comment>
<comment type="similarity">
    <text evidence="1">Belongs to the DNA mismatch repair MutS family.</text>
</comment>
<dbReference type="EMBL" id="FM242711">
    <property type="protein sequence ID" value="CAS05175.1"/>
    <property type="molecule type" value="Genomic_DNA"/>
</dbReference>
<dbReference type="RefSeq" id="WP_012681287.1">
    <property type="nucleotide sequence ID" value="NC_012488.1"/>
</dbReference>
<dbReference type="SMR" id="C1L2V9"/>
<dbReference type="KEGG" id="lmc:Lm4b_01412"/>
<dbReference type="HOGENOM" id="CLU_002472_3_1_9"/>
<dbReference type="GO" id="GO:0005829">
    <property type="term" value="C:cytosol"/>
    <property type="evidence" value="ECO:0007669"/>
    <property type="project" value="TreeGrafter"/>
</dbReference>
<dbReference type="GO" id="GO:0005524">
    <property type="term" value="F:ATP binding"/>
    <property type="evidence" value="ECO:0007669"/>
    <property type="project" value="UniProtKB-UniRule"/>
</dbReference>
<dbReference type="GO" id="GO:0140664">
    <property type="term" value="F:ATP-dependent DNA damage sensor activity"/>
    <property type="evidence" value="ECO:0007669"/>
    <property type="project" value="InterPro"/>
</dbReference>
<dbReference type="GO" id="GO:0003684">
    <property type="term" value="F:damaged DNA binding"/>
    <property type="evidence" value="ECO:0007669"/>
    <property type="project" value="UniProtKB-UniRule"/>
</dbReference>
<dbReference type="GO" id="GO:0030983">
    <property type="term" value="F:mismatched DNA binding"/>
    <property type="evidence" value="ECO:0007669"/>
    <property type="project" value="InterPro"/>
</dbReference>
<dbReference type="GO" id="GO:0006298">
    <property type="term" value="P:mismatch repair"/>
    <property type="evidence" value="ECO:0007669"/>
    <property type="project" value="UniProtKB-UniRule"/>
</dbReference>
<dbReference type="CDD" id="cd03284">
    <property type="entry name" value="ABC_MutS1"/>
    <property type="match status" value="1"/>
</dbReference>
<dbReference type="FunFam" id="1.10.1420.10:FF:000007">
    <property type="entry name" value="DNA mismatch repair protein MutS"/>
    <property type="match status" value="1"/>
</dbReference>
<dbReference type="FunFam" id="3.40.1170.10:FF:000001">
    <property type="entry name" value="DNA mismatch repair protein MutS"/>
    <property type="match status" value="1"/>
</dbReference>
<dbReference type="FunFam" id="3.40.50.300:FF:000896">
    <property type="entry name" value="DNA mismatch repair protein MutS"/>
    <property type="match status" value="1"/>
</dbReference>
<dbReference type="Gene3D" id="1.10.1420.10">
    <property type="match status" value="2"/>
</dbReference>
<dbReference type="Gene3D" id="3.40.1170.10">
    <property type="entry name" value="DNA repair protein MutS, domain I"/>
    <property type="match status" value="1"/>
</dbReference>
<dbReference type="Gene3D" id="3.30.420.110">
    <property type="entry name" value="MutS, connector domain"/>
    <property type="match status" value="1"/>
</dbReference>
<dbReference type="Gene3D" id="3.40.50.300">
    <property type="entry name" value="P-loop containing nucleotide triphosphate hydrolases"/>
    <property type="match status" value="1"/>
</dbReference>
<dbReference type="HAMAP" id="MF_00096">
    <property type="entry name" value="MutS"/>
    <property type="match status" value="1"/>
</dbReference>
<dbReference type="InterPro" id="IPR005748">
    <property type="entry name" value="DNA_mismatch_repair_MutS"/>
</dbReference>
<dbReference type="InterPro" id="IPR007695">
    <property type="entry name" value="DNA_mismatch_repair_MutS-lik_N"/>
</dbReference>
<dbReference type="InterPro" id="IPR017261">
    <property type="entry name" value="DNA_mismatch_repair_MutS/MSH"/>
</dbReference>
<dbReference type="InterPro" id="IPR000432">
    <property type="entry name" value="DNA_mismatch_repair_MutS_C"/>
</dbReference>
<dbReference type="InterPro" id="IPR007861">
    <property type="entry name" value="DNA_mismatch_repair_MutS_clamp"/>
</dbReference>
<dbReference type="InterPro" id="IPR007696">
    <property type="entry name" value="DNA_mismatch_repair_MutS_core"/>
</dbReference>
<dbReference type="InterPro" id="IPR016151">
    <property type="entry name" value="DNA_mismatch_repair_MutS_N"/>
</dbReference>
<dbReference type="InterPro" id="IPR036187">
    <property type="entry name" value="DNA_mismatch_repair_MutS_sf"/>
</dbReference>
<dbReference type="InterPro" id="IPR007860">
    <property type="entry name" value="DNA_mmatch_repair_MutS_con_dom"/>
</dbReference>
<dbReference type="InterPro" id="IPR045076">
    <property type="entry name" value="MutS"/>
</dbReference>
<dbReference type="InterPro" id="IPR036678">
    <property type="entry name" value="MutS_con_dom_sf"/>
</dbReference>
<dbReference type="InterPro" id="IPR027417">
    <property type="entry name" value="P-loop_NTPase"/>
</dbReference>
<dbReference type="NCBIfam" id="TIGR01070">
    <property type="entry name" value="mutS1"/>
    <property type="match status" value="1"/>
</dbReference>
<dbReference type="NCBIfam" id="NF003810">
    <property type="entry name" value="PRK05399.1"/>
    <property type="match status" value="1"/>
</dbReference>
<dbReference type="PANTHER" id="PTHR11361:SF34">
    <property type="entry name" value="DNA MISMATCH REPAIR PROTEIN MSH1, MITOCHONDRIAL"/>
    <property type="match status" value="1"/>
</dbReference>
<dbReference type="PANTHER" id="PTHR11361">
    <property type="entry name" value="DNA MISMATCH REPAIR PROTEIN MUTS FAMILY MEMBER"/>
    <property type="match status" value="1"/>
</dbReference>
<dbReference type="Pfam" id="PF01624">
    <property type="entry name" value="MutS_I"/>
    <property type="match status" value="1"/>
</dbReference>
<dbReference type="Pfam" id="PF05188">
    <property type="entry name" value="MutS_II"/>
    <property type="match status" value="1"/>
</dbReference>
<dbReference type="Pfam" id="PF05192">
    <property type="entry name" value="MutS_III"/>
    <property type="match status" value="1"/>
</dbReference>
<dbReference type="Pfam" id="PF05190">
    <property type="entry name" value="MutS_IV"/>
    <property type="match status" value="1"/>
</dbReference>
<dbReference type="Pfam" id="PF00488">
    <property type="entry name" value="MutS_V"/>
    <property type="match status" value="1"/>
</dbReference>
<dbReference type="PIRSF" id="PIRSF037677">
    <property type="entry name" value="DNA_mis_repair_Msh6"/>
    <property type="match status" value="1"/>
</dbReference>
<dbReference type="SMART" id="SM00534">
    <property type="entry name" value="MUTSac"/>
    <property type="match status" value="1"/>
</dbReference>
<dbReference type="SMART" id="SM00533">
    <property type="entry name" value="MUTSd"/>
    <property type="match status" value="1"/>
</dbReference>
<dbReference type="SUPFAM" id="SSF55271">
    <property type="entry name" value="DNA repair protein MutS, domain I"/>
    <property type="match status" value="1"/>
</dbReference>
<dbReference type="SUPFAM" id="SSF53150">
    <property type="entry name" value="DNA repair protein MutS, domain II"/>
    <property type="match status" value="1"/>
</dbReference>
<dbReference type="SUPFAM" id="SSF48334">
    <property type="entry name" value="DNA repair protein MutS, domain III"/>
    <property type="match status" value="1"/>
</dbReference>
<dbReference type="SUPFAM" id="SSF52540">
    <property type="entry name" value="P-loop containing nucleoside triphosphate hydrolases"/>
    <property type="match status" value="1"/>
</dbReference>
<dbReference type="PROSITE" id="PS00486">
    <property type="entry name" value="DNA_MISMATCH_REPAIR_2"/>
    <property type="match status" value="1"/>
</dbReference>
<proteinExistence type="inferred from homology"/>
<organism>
    <name type="scientific">Listeria monocytogenes serotype 4b (strain CLIP80459)</name>
    <dbReference type="NCBI Taxonomy" id="568819"/>
    <lineage>
        <taxon>Bacteria</taxon>
        <taxon>Bacillati</taxon>
        <taxon>Bacillota</taxon>
        <taxon>Bacilli</taxon>
        <taxon>Bacillales</taxon>
        <taxon>Listeriaceae</taxon>
        <taxon>Listeria</taxon>
    </lineage>
</organism>
<keyword id="KW-0067">ATP-binding</keyword>
<keyword id="KW-0227">DNA damage</keyword>
<keyword id="KW-0234">DNA repair</keyword>
<keyword id="KW-0238">DNA-binding</keyword>
<keyword id="KW-0547">Nucleotide-binding</keyword>
<feature type="chain" id="PRO_1000202740" description="DNA mismatch repair protein MutS">
    <location>
        <begin position="1"/>
        <end position="860"/>
    </location>
</feature>
<feature type="binding site" evidence="1">
    <location>
        <begin position="607"/>
        <end position="614"/>
    </location>
    <ligand>
        <name>ATP</name>
        <dbReference type="ChEBI" id="CHEBI:30616"/>
    </ligand>
</feature>
<accession>C1L2V9</accession>